<feature type="chain" id="PRO_1000092016" description="5'-nucleotidase SurE">
    <location>
        <begin position="1"/>
        <end position="254"/>
    </location>
</feature>
<feature type="binding site" evidence="1">
    <location>
        <position position="8"/>
    </location>
    <ligand>
        <name>a divalent metal cation</name>
        <dbReference type="ChEBI" id="CHEBI:60240"/>
    </ligand>
</feature>
<feature type="binding site" evidence="1">
    <location>
        <position position="9"/>
    </location>
    <ligand>
        <name>a divalent metal cation</name>
        <dbReference type="ChEBI" id="CHEBI:60240"/>
    </ligand>
</feature>
<feature type="binding site" evidence="1">
    <location>
        <position position="40"/>
    </location>
    <ligand>
        <name>a divalent metal cation</name>
        <dbReference type="ChEBI" id="CHEBI:60240"/>
    </ligand>
</feature>
<feature type="binding site" evidence="1">
    <location>
        <position position="93"/>
    </location>
    <ligand>
        <name>a divalent metal cation</name>
        <dbReference type="ChEBI" id="CHEBI:60240"/>
    </ligand>
</feature>
<organism>
    <name type="scientific">Methylorubrum extorquens (strain PA1)</name>
    <name type="common">Methylobacterium extorquens</name>
    <dbReference type="NCBI Taxonomy" id="419610"/>
    <lineage>
        <taxon>Bacteria</taxon>
        <taxon>Pseudomonadati</taxon>
        <taxon>Pseudomonadota</taxon>
        <taxon>Alphaproteobacteria</taxon>
        <taxon>Hyphomicrobiales</taxon>
        <taxon>Methylobacteriaceae</taxon>
        <taxon>Methylorubrum</taxon>
    </lineage>
</organism>
<gene>
    <name evidence="1" type="primary">surE</name>
    <name type="ordered locus">Mext_4233</name>
</gene>
<keyword id="KW-0963">Cytoplasm</keyword>
<keyword id="KW-0378">Hydrolase</keyword>
<keyword id="KW-0479">Metal-binding</keyword>
<keyword id="KW-0547">Nucleotide-binding</keyword>
<protein>
    <recommendedName>
        <fullName evidence="1">5'-nucleotidase SurE</fullName>
        <ecNumber evidence="1">3.1.3.5</ecNumber>
    </recommendedName>
    <alternativeName>
        <fullName evidence="1">Nucleoside 5'-monophosphate phosphohydrolase</fullName>
    </alternativeName>
</protein>
<sequence>MRILVTNDDGIHAPGLETLEGIARALSDDVWVVAPETDQSGVSHSLSLNDPLRLRQIGEKRFAVKGTPSDCIIMGVAHILKDHKPDLVLSGVNRGQNVAEDVTYSGTIAGAMEGTILGIRSIALSQAYGAGGRANLKWACAATHGPRVIEKILEIGIEPGILVNVNFPDCEPEDVQGVAVSAQGQRNQALLQIDARHDGRGNPYFWLAFAKARFEPGNGTDLKAIAENRISVTPLRLDLTDEPELTRFAAAFRA</sequence>
<proteinExistence type="inferred from homology"/>
<comment type="function">
    <text evidence="1">Nucleotidase that shows phosphatase activity on nucleoside 5'-monophosphates.</text>
</comment>
<comment type="catalytic activity">
    <reaction evidence="1">
        <text>a ribonucleoside 5'-phosphate + H2O = a ribonucleoside + phosphate</text>
        <dbReference type="Rhea" id="RHEA:12484"/>
        <dbReference type="ChEBI" id="CHEBI:15377"/>
        <dbReference type="ChEBI" id="CHEBI:18254"/>
        <dbReference type="ChEBI" id="CHEBI:43474"/>
        <dbReference type="ChEBI" id="CHEBI:58043"/>
        <dbReference type="EC" id="3.1.3.5"/>
    </reaction>
</comment>
<comment type="cofactor">
    <cofactor evidence="1">
        <name>a divalent metal cation</name>
        <dbReference type="ChEBI" id="CHEBI:60240"/>
    </cofactor>
    <text evidence="1">Binds 1 divalent metal cation per subunit.</text>
</comment>
<comment type="subcellular location">
    <subcellularLocation>
        <location evidence="1">Cytoplasm</location>
    </subcellularLocation>
</comment>
<comment type="similarity">
    <text evidence="1">Belongs to the SurE nucleotidase family.</text>
</comment>
<evidence type="ECO:0000255" key="1">
    <source>
        <dbReference type="HAMAP-Rule" id="MF_00060"/>
    </source>
</evidence>
<dbReference type="EC" id="3.1.3.5" evidence="1"/>
<dbReference type="EMBL" id="CP000908">
    <property type="protein sequence ID" value="ABY32602.1"/>
    <property type="molecule type" value="Genomic_DNA"/>
</dbReference>
<dbReference type="RefSeq" id="WP_003605704.1">
    <property type="nucleotide sequence ID" value="NC_010172.1"/>
</dbReference>
<dbReference type="SMR" id="A9VY48"/>
<dbReference type="KEGG" id="mex:Mext_4233"/>
<dbReference type="eggNOG" id="COG0496">
    <property type="taxonomic scope" value="Bacteria"/>
</dbReference>
<dbReference type="HOGENOM" id="CLU_045192_1_2_5"/>
<dbReference type="BioCyc" id="MEXT419610:MEXT_RS21265-MONOMER"/>
<dbReference type="GO" id="GO:0005737">
    <property type="term" value="C:cytoplasm"/>
    <property type="evidence" value="ECO:0007669"/>
    <property type="project" value="UniProtKB-SubCell"/>
</dbReference>
<dbReference type="GO" id="GO:0008254">
    <property type="term" value="F:3'-nucleotidase activity"/>
    <property type="evidence" value="ECO:0007669"/>
    <property type="project" value="TreeGrafter"/>
</dbReference>
<dbReference type="GO" id="GO:0008253">
    <property type="term" value="F:5'-nucleotidase activity"/>
    <property type="evidence" value="ECO:0007669"/>
    <property type="project" value="UniProtKB-UniRule"/>
</dbReference>
<dbReference type="GO" id="GO:0004309">
    <property type="term" value="F:exopolyphosphatase activity"/>
    <property type="evidence" value="ECO:0007669"/>
    <property type="project" value="TreeGrafter"/>
</dbReference>
<dbReference type="GO" id="GO:0046872">
    <property type="term" value="F:metal ion binding"/>
    <property type="evidence" value="ECO:0007669"/>
    <property type="project" value="UniProtKB-UniRule"/>
</dbReference>
<dbReference type="GO" id="GO:0000166">
    <property type="term" value="F:nucleotide binding"/>
    <property type="evidence" value="ECO:0007669"/>
    <property type="project" value="UniProtKB-KW"/>
</dbReference>
<dbReference type="FunFam" id="3.40.1210.10:FF:000001">
    <property type="entry name" value="5'/3'-nucleotidase SurE"/>
    <property type="match status" value="1"/>
</dbReference>
<dbReference type="Gene3D" id="3.40.1210.10">
    <property type="entry name" value="Survival protein SurE-like phosphatase/nucleotidase"/>
    <property type="match status" value="1"/>
</dbReference>
<dbReference type="HAMAP" id="MF_00060">
    <property type="entry name" value="SurE"/>
    <property type="match status" value="1"/>
</dbReference>
<dbReference type="InterPro" id="IPR030048">
    <property type="entry name" value="SurE"/>
</dbReference>
<dbReference type="InterPro" id="IPR002828">
    <property type="entry name" value="SurE-like_Pase/nucleotidase"/>
</dbReference>
<dbReference type="InterPro" id="IPR036523">
    <property type="entry name" value="SurE-like_sf"/>
</dbReference>
<dbReference type="NCBIfam" id="NF001490">
    <property type="entry name" value="PRK00346.1-4"/>
    <property type="match status" value="1"/>
</dbReference>
<dbReference type="NCBIfam" id="TIGR00087">
    <property type="entry name" value="surE"/>
    <property type="match status" value="1"/>
</dbReference>
<dbReference type="PANTHER" id="PTHR30457">
    <property type="entry name" value="5'-NUCLEOTIDASE SURE"/>
    <property type="match status" value="1"/>
</dbReference>
<dbReference type="PANTHER" id="PTHR30457:SF12">
    <property type="entry name" value="5'_3'-NUCLEOTIDASE SURE"/>
    <property type="match status" value="1"/>
</dbReference>
<dbReference type="Pfam" id="PF01975">
    <property type="entry name" value="SurE"/>
    <property type="match status" value="1"/>
</dbReference>
<dbReference type="SUPFAM" id="SSF64167">
    <property type="entry name" value="SurE-like"/>
    <property type="match status" value="1"/>
</dbReference>
<reference key="1">
    <citation type="submission" date="2007-12" db="EMBL/GenBank/DDBJ databases">
        <title>Complete sequence of Methylobacterium extorquens PA1.</title>
        <authorList>
            <consortium name="US DOE Joint Genome Institute"/>
            <person name="Copeland A."/>
            <person name="Lucas S."/>
            <person name="Lapidus A."/>
            <person name="Barry K."/>
            <person name="Glavina del Rio T."/>
            <person name="Dalin E."/>
            <person name="Tice H."/>
            <person name="Pitluck S."/>
            <person name="Saunders E."/>
            <person name="Brettin T."/>
            <person name="Bruce D."/>
            <person name="Detter J.C."/>
            <person name="Han C."/>
            <person name="Schmutz J."/>
            <person name="Larimer F."/>
            <person name="Land M."/>
            <person name="Hauser L."/>
            <person name="Kyrpides N."/>
            <person name="Kim E."/>
            <person name="Marx C."/>
            <person name="Richardson P."/>
        </authorList>
    </citation>
    <scope>NUCLEOTIDE SEQUENCE [LARGE SCALE GENOMIC DNA]</scope>
    <source>
        <strain>PA1</strain>
    </source>
</reference>
<accession>A9VY48</accession>
<name>SURE_METEP</name>